<protein>
    <recommendedName>
        <fullName>Tetracycline resistance protein TetM</fullName>
        <shortName>TetA(M)</shortName>
    </recommendedName>
</protein>
<feature type="chain" id="PRO_0000091499" description="Tetracycline resistance protein TetM">
    <location>
        <begin position="1"/>
        <end position="639"/>
    </location>
</feature>
<feature type="domain" description="tr-type G" evidence="2">
    <location>
        <begin position="1"/>
        <end position="242"/>
    </location>
</feature>
<feature type="binding site" evidence="1">
    <location>
        <begin position="10"/>
        <end position="17"/>
    </location>
    <ligand>
        <name>GTP</name>
        <dbReference type="ChEBI" id="CHEBI:37565"/>
    </ligand>
</feature>
<feature type="binding site" evidence="1">
    <location>
        <begin position="74"/>
        <end position="78"/>
    </location>
    <ligand>
        <name>GTP</name>
        <dbReference type="ChEBI" id="CHEBI:37565"/>
    </ligand>
</feature>
<feature type="binding site" evidence="1">
    <location>
        <begin position="128"/>
        <end position="131"/>
    </location>
    <ligand>
        <name>GTP</name>
        <dbReference type="ChEBI" id="CHEBI:37565"/>
    </ligand>
</feature>
<gene>
    <name type="primary">tetM</name>
    <name type="ordered locus">SAV0398</name>
</gene>
<name>TETM_STAAM</name>
<proteinExistence type="inferred from homology"/>
<accession>Q932I8</accession>
<sequence length="639" mass="72549">MKIINIGVLAHVDAGKTTLTESLLYNSGAITELGSVDKGTTRTDNTLLERQRGITIQTGITSFQWENTKVNIIDTPGHMDFLAEVYRSLSVLDGAILLISAKDGVQAQTRILFHALRKMGIPTIFFINKIDQNGIDLSTVYQDIKEKLSAEIVIKQKVELYPNMCVTNFTESEQWDTVIEGNDDLLEKYMSGKSLEALELEQEESIRFQNCSLFPLYHGSAKSNIGIDNLIEVITNKFYSSTHRGPSELCGNVFKIEYTKKRQRLAYIRLYSGVLHLRDSVRVSEKEKIKVTEMYTSINGELCKIDRAYSGEIVILQNEFLKLNSVLGDTKLLPQRKKIENPHPLLQTTVEPSKPEQREMLLDALLEISDSDPLLRYYVDSTTHEIILSFLGKVQMEVISALLQEKYHVEIELKEPTVIYMERPLKNAEYTIHIEVPPNPFWASIGLSVSPLPLGSGMQYESSVSLGYLNQSFQNAVMEGIRYGCEQGLYGWNVTDCKICFKYGLYYSPVSTPADFRMLTPIVLEQAFRKAGTELLEPYLSFKVYAPQEYLSRAYNDAPKYCANIVNTQLKNNEVIIIGEIPARCIQDYRNDLTFFTNGLSVCLAELKGYQVTTGEPVCQTRRLNSRIDKVRYMFNKIT</sequence>
<reference key="1">
    <citation type="journal article" date="2001" name="Lancet">
        <title>Whole genome sequencing of meticillin-resistant Staphylococcus aureus.</title>
        <authorList>
            <person name="Kuroda M."/>
            <person name="Ohta T."/>
            <person name="Uchiyama I."/>
            <person name="Baba T."/>
            <person name="Yuzawa H."/>
            <person name="Kobayashi I."/>
            <person name="Cui L."/>
            <person name="Oguchi A."/>
            <person name="Aoki K."/>
            <person name="Nagai Y."/>
            <person name="Lian J.-Q."/>
            <person name="Ito T."/>
            <person name="Kanamori M."/>
            <person name="Matsumaru H."/>
            <person name="Maruyama A."/>
            <person name="Murakami H."/>
            <person name="Hosoyama A."/>
            <person name="Mizutani-Ui Y."/>
            <person name="Takahashi N.K."/>
            <person name="Sawano T."/>
            <person name="Inoue R."/>
            <person name="Kaito C."/>
            <person name="Sekimizu K."/>
            <person name="Hirakawa H."/>
            <person name="Kuhara S."/>
            <person name="Goto S."/>
            <person name="Yabuzaki J."/>
            <person name="Kanehisa M."/>
            <person name="Yamashita A."/>
            <person name="Oshima K."/>
            <person name="Furuya K."/>
            <person name="Yoshino C."/>
            <person name="Shiba T."/>
            <person name="Hattori M."/>
            <person name="Ogasawara N."/>
            <person name="Hayashi H."/>
            <person name="Hiramatsu K."/>
        </authorList>
    </citation>
    <scope>NUCLEOTIDE SEQUENCE [LARGE SCALE GENOMIC DNA]</scope>
    <source>
        <strain>Mu50 / ATCC 700699</strain>
    </source>
</reference>
<keyword id="KW-0046">Antibiotic resistance</keyword>
<keyword id="KW-0342">GTP-binding</keyword>
<keyword id="KW-0547">Nucleotide-binding</keyword>
<keyword id="KW-0648">Protein biosynthesis</keyword>
<organism>
    <name type="scientific">Staphylococcus aureus (strain Mu50 / ATCC 700699)</name>
    <dbReference type="NCBI Taxonomy" id="158878"/>
    <lineage>
        <taxon>Bacteria</taxon>
        <taxon>Bacillati</taxon>
        <taxon>Bacillota</taxon>
        <taxon>Bacilli</taxon>
        <taxon>Bacillales</taxon>
        <taxon>Staphylococcaceae</taxon>
        <taxon>Staphylococcus</taxon>
    </lineage>
</organism>
<evidence type="ECO:0000250" key="1"/>
<evidence type="ECO:0000255" key="2">
    <source>
        <dbReference type="PROSITE-ProRule" id="PRU01059"/>
    </source>
</evidence>
<comment type="function">
    <text evidence="1">Abolishes the inhibitory effect of tetracyclin on protein synthesis by a non-covalent modification of the ribosomes.</text>
</comment>
<comment type="similarity">
    <text evidence="2">Belongs to the TRAFAC class translation factor GTPase superfamily. Classic translation factor GTPase family. TetM/TetO subfamily.</text>
</comment>
<dbReference type="EMBL" id="BA000017">
    <property type="protein sequence ID" value="BAB56560.1"/>
    <property type="molecule type" value="Genomic_DNA"/>
</dbReference>
<dbReference type="SMR" id="Q932I8"/>
<dbReference type="KEGG" id="sav:SAV0398"/>
<dbReference type="HOGENOM" id="CLU_002794_4_2_9"/>
<dbReference type="PhylomeDB" id="Q932I8"/>
<dbReference type="Proteomes" id="UP000002481">
    <property type="component" value="Chromosome"/>
</dbReference>
<dbReference type="GO" id="GO:0005525">
    <property type="term" value="F:GTP binding"/>
    <property type="evidence" value="ECO:0007669"/>
    <property type="project" value="UniProtKB-KW"/>
</dbReference>
<dbReference type="GO" id="GO:0003924">
    <property type="term" value="F:GTPase activity"/>
    <property type="evidence" value="ECO:0007669"/>
    <property type="project" value="InterPro"/>
</dbReference>
<dbReference type="GO" id="GO:0046677">
    <property type="term" value="P:response to antibiotic"/>
    <property type="evidence" value="ECO:0007669"/>
    <property type="project" value="UniProtKB-KW"/>
</dbReference>
<dbReference type="GO" id="GO:0032790">
    <property type="term" value="P:ribosome disassembly"/>
    <property type="evidence" value="ECO:0007669"/>
    <property type="project" value="TreeGrafter"/>
</dbReference>
<dbReference type="GO" id="GO:0006412">
    <property type="term" value="P:translation"/>
    <property type="evidence" value="ECO:0007669"/>
    <property type="project" value="UniProtKB-KW"/>
</dbReference>
<dbReference type="CDD" id="cd03711">
    <property type="entry name" value="Tet_C"/>
    <property type="match status" value="1"/>
</dbReference>
<dbReference type="CDD" id="cd03690">
    <property type="entry name" value="Tet_II"/>
    <property type="match status" value="1"/>
</dbReference>
<dbReference type="CDD" id="cd16258">
    <property type="entry name" value="Tet_III"/>
    <property type="match status" value="1"/>
</dbReference>
<dbReference type="CDD" id="cd01684">
    <property type="entry name" value="Tet_like_IV"/>
    <property type="match status" value="1"/>
</dbReference>
<dbReference type="CDD" id="cd04168">
    <property type="entry name" value="TetM_like"/>
    <property type="match status" value="1"/>
</dbReference>
<dbReference type="Gene3D" id="3.30.230.10">
    <property type="match status" value="1"/>
</dbReference>
<dbReference type="Gene3D" id="3.30.70.240">
    <property type="match status" value="1"/>
</dbReference>
<dbReference type="Gene3D" id="3.30.70.870">
    <property type="entry name" value="Elongation Factor G (Translational Gtpase), domain 3"/>
    <property type="match status" value="1"/>
</dbReference>
<dbReference type="Gene3D" id="3.40.50.300">
    <property type="entry name" value="P-loop containing nucleotide triphosphate hydrolases"/>
    <property type="match status" value="1"/>
</dbReference>
<dbReference type="Gene3D" id="2.40.30.10">
    <property type="entry name" value="Translation factors"/>
    <property type="match status" value="1"/>
</dbReference>
<dbReference type="InterPro" id="IPR053905">
    <property type="entry name" value="EF-G-like_DII"/>
</dbReference>
<dbReference type="InterPro" id="IPR041095">
    <property type="entry name" value="EFG_II"/>
</dbReference>
<dbReference type="InterPro" id="IPR035647">
    <property type="entry name" value="EFG_III/V"/>
</dbReference>
<dbReference type="InterPro" id="IPR000640">
    <property type="entry name" value="EFG_V-like"/>
</dbReference>
<dbReference type="InterPro" id="IPR031157">
    <property type="entry name" value="G_TR_CS"/>
</dbReference>
<dbReference type="InterPro" id="IPR027417">
    <property type="entry name" value="P-loop_NTPase"/>
</dbReference>
<dbReference type="InterPro" id="IPR020568">
    <property type="entry name" value="Ribosomal_Su5_D2-typ_SF"/>
</dbReference>
<dbReference type="InterPro" id="IPR014721">
    <property type="entry name" value="Ribsml_uS5_D2-typ_fold_subgr"/>
</dbReference>
<dbReference type="InterPro" id="IPR005225">
    <property type="entry name" value="Small_GTP-bd"/>
</dbReference>
<dbReference type="InterPro" id="IPR000795">
    <property type="entry name" value="T_Tr_GTP-bd_dom"/>
</dbReference>
<dbReference type="InterPro" id="IPR035650">
    <property type="entry name" value="Tet_C"/>
</dbReference>
<dbReference type="InterPro" id="IPR009000">
    <property type="entry name" value="Transl_B-barrel_sf"/>
</dbReference>
<dbReference type="InterPro" id="IPR005517">
    <property type="entry name" value="Transl_elong_EFG/EF2_IV"/>
</dbReference>
<dbReference type="NCBIfam" id="TIGR00231">
    <property type="entry name" value="small_GTP"/>
    <property type="match status" value="1"/>
</dbReference>
<dbReference type="NCBIfam" id="NF012153">
    <property type="entry name" value="tet_protect"/>
    <property type="match status" value="1"/>
</dbReference>
<dbReference type="NCBIfam" id="NF012155">
    <property type="entry name" value="tet_protect_M"/>
    <property type="match status" value="1"/>
</dbReference>
<dbReference type="NCBIfam" id="NF033148">
    <property type="entry name" value="tet_protect_M_W"/>
    <property type="match status" value="1"/>
</dbReference>
<dbReference type="PANTHER" id="PTHR43261:SF1">
    <property type="entry name" value="RIBOSOME-RELEASING FACTOR 2, MITOCHONDRIAL"/>
    <property type="match status" value="1"/>
</dbReference>
<dbReference type="PANTHER" id="PTHR43261">
    <property type="entry name" value="TRANSLATION ELONGATION FACTOR G-RELATED"/>
    <property type="match status" value="1"/>
</dbReference>
<dbReference type="Pfam" id="PF22042">
    <property type="entry name" value="EF-G_D2"/>
    <property type="match status" value="1"/>
</dbReference>
<dbReference type="Pfam" id="PF00679">
    <property type="entry name" value="EFG_C"/>
    <property type="match status" value="1"/>
</dbReference>
<dbReference type="Pfam" id="PF14492">
    <property type="entry name" value="EFG_III"/>
    <property type="match status" value="1"/>
</dbReference>
<dbReference type="Pfam" id="PF03764">
    <property type="entry name" value="EFG_IV"/>
    <property type="match status" value="1"/>
</dbReference>
<dbReference type="Pfam" id="PF00009">
    <property type="entry name" value="GTP_EFTU"/>
    <property type="match status" value="1"/>
</dbReference>
<dbReference type="PRINTS" id="PR00315">
    <property type="entry name" value="ELONGATNFCT"/>
</dbReference>
<dbReference type="PRINTS" id="PR01037">
    <property type="entry name" value="TCRTETOQM"/>
</dbReference>
<dbReference type="SMART" id="SM00889">
    <property type="entry name" value="EFG_IV"/>
    <property type="match status" value="1"/>
</dbReference>
<dbReference type="SUPFAM" id="SSF54980">
    <property type="entry name" value="EF-G C-terminal domain-like"/>
    <property type="match status" value="2"/>
</dbReference>
<dbReference type="SUPFAM" id="SSF52540">
    <property type="entry name" value="P-loop containing nucleoside triphosphate hydrolases"/>
    <property type="match status" value="1"/>
</dbReference>
<dbReference type="SUPFAM" id="SSF54211">
    <property type="entry name" value="Ribosomal protein S5 domain 2-like"/>
    <property type="match status" value="1"/>
</dbReference>
<dbReference type="SUPFAM" id="SSF50447">
    <property type="entry name" value="Translation proteins"/>
    <property type="match status" value="1"/>
</dbReference>
<dbReference type="PROSITE" id="PS00301">
    <property type="entry name" value="G_TR_1"/>
    <property type="match status" value="1"/>
</dbReference>
<dbReference type="PROSITE" id="PS51722">
    <property type="entry name" value="G_TR_2"/>
    <property type="match status" value="1"/>
</dbReference>